<gene>
    <name evidence="1" type="primary">mnmE</name>
    <name evidence="1" type="synonym">trmE</name>
    <name type="ordered locus">BVU_3651</name>
</gene>
<name>MNME_PHOV8</name>
<evidence type="ECO:0000255" key="1">
    <source>
        <dbReference type="HAMAP-Rule" id="MF_00379"/>
    </source>
</evidence>
<accession>A6L6E8</accession>
<proteinExistence type="inferred from homology"/>
<feature type="chain" id="PRO_0000345715" description="tRNA modification GTPase MnmE">
    <location>
        <begin position="1"/>
        <end position="500"/>
    </location>
</feature>
<feature type="domain" description="TrmE-type G">
    <location>
        <begin position="256"/>
        <end position="420"/>
    </location>
</feature>
<feature type="binding site" evidence="1">
    <location>
        <position position="24"/>
    </location>
    <ligand>
        <name>(6S)-5-formyl-5,6,7,8-tetrahydrofolate</name>
        <dbReference type="ChEBI" id="CHEBI:57457"/>
    </ligand>
</feature>
<feature type="binding site" evidence="1">
    <location>
        <position position="120"/>
    </location>
    <ligand>
        <name>(6S)-5-formyl-5,6,7,8-tetrahydrofolate</name>
        <dbReference type="ChEBI" id="CHEBI:57457"/>
    </ligand>
</feature>
<feature type="binding site" evidence="1">
    <location>
        <position position="159"/>
    </location>
    <ligand>
        <name>(6S)-5-formyl-5,6,7,8-tetrahydrofolate</name>
        <dbReference type="ChEBI" id="CHEBI:57457"/>
    </ligand>
</feature>
<feature type="binding site" evidence="1">
    <location>
        <begin position="266"/>
        <end position="271"/>
    </location>
    <ligand>
        <name>GTP</name>
        <dbReference type="ChEBI" id="CHEBI:37565"/>
    </ligand>
</feature>
<feature type="binding site" evidence="1">
    <location>
        <position position="266"/>
    </location>
    <ligand>
        <name>K(+)</name>
        <dbReference type="ChEBI" id="CHEBI:29103"/>
    </ligand>
</feature>
<feature type="binding site" evidence="1">
    <location>
        <position position="270"/>
    </location>
    <ligand>
        <name>Mg(2+)</name>
        <dbReference type="ChEBI" id="CHEBI:18420"/>
    </ligand>
</feature>
<feature type="binding site" evidence="1">
    <location>
        <begin position="285"/>
        <end position="291"/>
    </location>
    <ligand>
        <name>GTP</name>
        <dbReference type="ChEBI" id="CHEBI:37565"/>
    </ligand>
</feature>
<feature type="binding site" evidence="1">
    <location>
        <position position="285"/>
    </location>
    <ligand>
        <name>K(+)</name>
        <dbReference type="ChEBI" id="CHEBI:29103"/>
    </ligand>
</feature>
<feature type="binding site" evidence="1">
    <location>
        <position position="287"/>
    </location>
    <ligand>
        <name>K(+)</name>
        <dbReference type="ChEBI" id="CHEBI:29103"/>
    </ligand>
</feature>
<feature type="binding site" evidence="1">
    <location>
        <position position="290"/>
    </location>
    <ligand>
        <name>K(+)</name>
        <dbReference type="ChEBI" id="CHEBI:29103"/>
    </ligand>
</feature>
<feature type="binding site" evidence="1">
    <location>
        <position position="291"/>
    </location>
    <ligand>
        <name>Mg(2+)</name>
        <dbReference type="ChEBI" id="CHEBI:18420"/>
    </ligand>
</feature>
<feature type="binding site" evidence="1">
    <location>
        <begin position="310"/>
        <end position="313"/>
    </location>
    <ligand>
        <name>GTP</name>
        <dbReference type="ChEBI" id="CHEBI:37565"/>
    </ligand>
</feature>
<feature type="binding site" evidence="1">
    <location>
        <position position="500"/>
    </location>
    <ligand>
        <name>(6S)-5-formyl-5,6,7,8-tetrahydrofolate</name>
        <dbReference type="ChEBI" id="CHEBI:57457"/>
    </ligand>
</feature>
<comment type="function">
    <text evidence="1">Exhibits a very high intrinsic GTPase hydrolysis rate. Involved in the addition of a carboxymethylaminomethyl (cmnm) group at the wobble position (U34) of certain tRNAs, forming tRNA-cmnm(5)s(2)U34.</text>
</comment>
<comment type="cofactor">
    <cofactor evidence="1">
        <name>K(+)</name>
        <dbReference type="ChEBI" id="CHEBI:29103"/>
    </cofactor>
    <text evidence="1">Binds 1 potassium ion per subunit.</text>
</comment>
<comment type="subunit">
    <text evidence="1">Homodimer. Heterotetramer of two MnmE and two MnmG subunits.</text>
</comment>
<comment type="subcellular location">
    <subcellularLocation>
        <location evidence="1">Cytoplasm</location>
    </subcellularLocation>
</comment>
<comment type="similarity">
    <text evidence="1">Belongs to the TRAFAC class TrmE-Era-EngA-EngB-Septin-like GTPase superfamily. TrmE GTPase family.</text>
</comment>
<reference key="1">
    <citation type="journal article" date="2007" name="PLoS Biol.">
        <title>Evolution of symbiotic bacteria in the distal human intestine.</title>
        <authorList>
            <person name="Xu J."/>
            <person name="Mahowald M.A."/>
            <person name="Ley R.E."/>
            <person name="Lozupone C.A."/>
            <person name="Hamady M."/>
            <person name="Martens E.C."/>
            <person name="Henrissat B."/>
            <person name="Coutinho P.M."/>
            <person name="Minx P."/>
            <person name="Latreille P."/>
            <person name="Cordum H."/>
            <person name="Van Brunt A."/>
            <person name="Kim K."/>
            <person name="Fulton R.S."/>
            <person name="Fulton L.A."/>
            <person name="Clifton S.W."/>
            <person name="Wilson R.K."/>
            <person name="Knight R.D."/>
            <person name="Gordon J.I."/>
        </authorList>
    </citation>
    <scope>NUCLEOTIDE SEQUENCE [LARGE SCALE GENOMIC DNA]</scope>
    <source>
        <strain>ATCC 8482 / DSM 1447 / JCM 5826 / CCUG 4940 / NBRC 14291 / NCTC 11154</strain>
    </source>
</reference>
<sequence length="500" mass="55501">MKMINQDTICAIATAQGGAIGIIRVSGPKAIEITSRIFTPATGKPLTERAPYTLTFGKICSPKRKINNTLFQQTSEIPQEKSETLQKTSSITSSAEEVIDEVLISLFRAPHSYTGEDSTEIMCHGSSYILQQVIQLLIYNGCRAALPGEYTQRAFLNGKMDLSQAEAVADLIASSSASTHRLAMSQMRGGFSKELSNLRNQLLHFTSLMELELDFSDHEELEFANRDELSSLATHIEQVIARLAHSFSVGNAIKNGIPVAIIGETNAGKSTLLNALLNEEKAIVSDIHGTTRDVIEDTINLQGVTFRFIDTAGIRQTNDTIENLGIERTFQKMDQAYVILWMIDSTDAQRRFEELKADILPHCEGKKMIILFNKSDLLLATQKEELSAIFADMKVEKLFISAKKRENITILEKKLVQAAALPEVNQNDIIITNVRHYEALTRALDSIHRVQEGLQLELSGDLVSEDLRQCIHELSEIVAEGGITSEETLQNIFQNFCIGK</sequence>
<dbReference type="EC" id="3.6.-.-" evidence="1"/>
<dbReference type="EMBL" id="CP000139">
    <property type="protein sequence ID" value="ABR41262.1"/>
    <property type="molecule type" value="Genomic_DNA"/>
</dbReference>
<dbReference type="SMR" id="A6L6E8"/>
<dbReference type="STRING" id="435590.BVU_3651"/>
<dbReference type="PaxDb" id="435590-BVU_3651"/>
<dbReference type="KEGG" id="bvu:BVU_3651"/>
<dbReference type="eggNOG" id="COG0486">
    <property type="taxonomic scope" value="Bacteria"/>
</dbReference>
<dbReference type="HOGENOM" id="CLU_019624_3_1_10"/>
<dbReference type="Proteomes" id="UP000002861">
    <property type="component" value="Chromosome"/>
</dbReference>
<dbReference type="GO" id="GO:0005829">
    <property type="term" value="C:cytosol"/>
    <property type="evidence" value="ECO:0007669"/>
    <property type="project" value="TreeGrafter"/>
</dbReference>
<dbReference type="GO" id="GO:0005525">
    <property type="term" value="F:GTP binding"/>
    <property type="evidence" value="ECO:0007669"/>
    <property type="project" value="UniProtKB-UniRule"/>
</dbReference>
<dbReference type="GO" id="GO:0003924">
    <property type="term" value="F:GTPase activity"/>
    <property type="evidence" value="ECO:0007669"/>
    <property type="project" value="UniProtKB-UniRule"/>
</dbReference>
<dbReference type="GO" id="GO:0046872">
    <property type="term" value="F:metal ion binding"/>
    <property type="evidence" value="ECO:0007669"/>
    <property type="project" value="UniProtKB-KW"/>
</dbReference>
<dbReference type="GO" id="GO:0030488">
    <property type="term" value="P:tRNA methylation"/>
    <property type="evidence" value="ECO:0007669"/>
    <property type="project" value="TreeGrafter"/>
</dbReference>
<dbReference type="GO" id="GO:0002098">
    <property type="term" value="P:tRNA wobble uridine modification"/>
    <property type="evidence" value="ECO:0007669"/>
    <property type="project" value="TreeGrafter"/>
</dbReference>
<dbReference type="CDD" id="cd04164">
    <property type="entry name" value="trmE"/>
    <property type="match status" value="1"/>
</dbReference>
<dbReference type="CDD" id="cd14858">
    <property type="entry name" value="TrmE_N"/>
    <property type="match status" value="1"/>
</dbReference>
<dbReference type="FunFam" id="3.40.50.300:FF:001376">
    <property type="entry name" value="tRNA modification GTPase MnmE"/>
    <property type="match status" value="1"/>
</dbReference>
<dbReference type="Gene3D" id="3.40.50.300">
    <property type="entry name" value="P-loop containing nucleotide triphosphate hydrolases"/>
    <property type="match status" value="1"/>
</dbReference>
<dbReference type="Gene3D" id="3.30.1360.120">
    <property type="entry name" value="Probable tRNA modification gtpase trme, domain 1"/>
    <property type="match status" value="1"/>
</dbReference>
<dbReference type="Gene3D" id="1.20.120.430">
    <property type="entry name" value="tRNA modification GTPase MnmE domain 2"/>
    <property type="match status" value="1"/>
</dbReference>
<dbReference type="HAMAP" id="MF_00379">
    <property type="entry name" value="GTPase_MnmE"/>
    <property type="match status" value="1"/>
</dbReference>
<dbReference type="InterPro" id="IPR031168">
    <property type="entry name" value="G_TrmE"/>
</dbReference>
<dbReference type="InterPro" id="IPR006073">
    <property type="entry name" value="GTP-bd"/>
</dbReference>
<dbReference type="InterPro" id="IPR018948">
    <property type="entry name" value="GTP-bd_TrmE_N"/>
</dbReference>
<dbReference type="InterPro" id="IPR004520">
    <property type="entry name" value="GTPase_MnmE"/>
</dbReference>
<dbReference type="InterPro" id="IPR027368">
    <property type="entry name" value="MnmE_dom2"/>
</dbReference>
<dbReference type="InterPro" id="IPR025867">
    <property type="entry name" value="MnmE_helical"/>
</dbReference>
<dbReference type="InterPro" id="IPR027417">
    <property type="entry name" value="P-loop_NTPase"/>
</dbReference>
<dbReference type="InterPro" id="IPR005225">
    <property type="entry name" value="Small_GTP-bd"/>
</dbReference>
<dbReference type="InterPro" id="IPR027266">
    <property type="entry name" value="TrmE/GcvT_dom1"/>
</dbReference>
<dbReference type="NCBIfam" id="TIGR00450">
    <property type="entry name" value="mnmE_trmE_thdF"/>
    <property type="match status" value="1"/>
</dbReference>
<dbReference type="NCBIfam" id="TIGR00231">
    <property type="entry name" value="small_GTP"/>
    <property type="match status" value="1"/>
</dbReference>
<dbReference type="PANTHER" id="PTHR42714">
    <property type="entry name" value="TRNA MODIFICATION GTPASE GTPBP3"/>
    <property type="match status" value="1"/>
</dbReference>
<dbReference type="PANTHER" id="PTHR42714:SF2">
    <property type="entry name" value="TRNA MODIFICATION GTPASE GTPBP3, MITOCHONDRIAL"/>
    <property type="match status" value="1"/>
</dbReference>
<dbReference type="Pfam" id="PF01926">
    <property type="entry name" value="MMR_HSR1"/>
    <property type="match status" value="1"/>
</dbReference>
<dbReference type="Pfam" id="PF12631">
    <property type="entry name" value="MnmE_helical"/>
    <property type="match status" value="1"/>
</dbReference>
<dbReference type="Pfam" id="PF10396">
    <property type="entry name" value="TrmE_N"/>
    <property type="match status" value="1"/>
</dbReference>
<dbReference type="SUPFAM" id="SSF52540">
    <property type="entry name" value="P-loop containing nucleoside triphosphate hydrolases"/>
    <property type="match status" value="1"/>
</dbReference>
<dbReference type="PROSITE" id="PS51709">
    <property type="entry name" value="G_TRME"/>
    <property type="match status" value="1"/>
</dbReference>
<organism>
    <name type="scientific">Phocaeicola vulgatus (strain ATCC 8482 / DSM 1447 / JCM 5826 / CCUG 4940 / NBRC 14291 / NCTC 11154)</name>
    <name type="common">Bacteroides vulgatus</name>
    <dbReference type="NCBI Taxonomy" id="435590"/>
    <lineage>
        <taxon>Bacteria</taxon>
        <taxon>Pseudomonadati</taxon>
        <taxon>Bacteroidota</taxon>
        <taxon>Bacteroidia</taxon>
        <taxon>Bacteroidales</taxon>
        <taxon>Bacteroidaceae</taxon>
        <taxon>Phocaeicola</taxon>
    </lineage>
</organism>
<protein>
    <recommendedName>
        <fullName evidence="1">tRNA modification GTPase MnmE</fullName>
        <ecNumber evidence="1">3.6.-.-</ecNumber>
    </recommendedName>
</protein>
<keyword id="KW-0963">Cytoplasm</keyword>
<keyword id="KW-0342">GTP-binding</keyword>
<keyword id="KW-0378">Hydrolase</keyword>
<keyword id="KW-0460">Magnesium</keyword>
<keyword id="KW-0479">Metal-binding</keyword>
<keyword id="KW-0547">Nucleotide-binding</keyword>
<keyword id="KW-0630">Potassium</keyword>
<keyword id="KW-0819">tRNA processing</keyword>